<comment type="function">
    <text evidence="1">Component of the cytochrome c oxidase, the last enzyme in the mitochondrial electron transport chain which drives oxidative phosphorylation. The respiratory chain contains 3 multisubunit complexes succinate dehydrogenase (complex II, CII), ubiquinol-cytochrome c oxidoreductase (cytochrome b-c1 complex, complex III, CIII) and cytochrome c oxidase (complex IV, CIV), that cooperate to transfer electrons derived from NADH and succinate to molecular oxygen, creating an electrochemical gradient over the inner membrane that drives transmembrane transport and the ATP synthase. Cytochrome c oxidase is the component of the respiratory chain that catalyzes the reduction of oxygen to water. Electrons originating from reduced cytochrome c in the intermembrane space (IMS) are transferred via the dinuclear copper A center (CU(A)) of subunit 2 and heme A of subunit 1 to the active site in subunit 1, a binuclear center (BNC) formed by heme A3 and copper B (CU(B)). The BNC reduces molecular oxygen to 2 water molecules using 4 electrons from cytochrome c in the IMS and 4 protons from the mitochondrial matrix.</text>
</comment>
<comment type="catalytic activity">
    <reaction evidence="1">
        <text>4 Fe(II)-[cytochrome c] + O2 + 8 H(+)(in) = 4 Fe(III)-[cytochrome c] + 2 H2O + 4 H(+)(out)</text>
        <dbReference type="Rhea" id="RHEA:11436"/>
        <dbReference type="Rhea" id="RHEA-COMP:10350"/>
        <dbReference type="Rhea" id="RHEA-COMP:14399"/>
        <dbReference type="ChEBI" id="CHEBI:15377"/>
        <dbReference type="ChEBI" id="CHEBI:15378"/>
        <dbReference type="ChEBI" id="CHEBI:15379"/>
        <dbReference type="ChEBI" id="CHEBI:29033"/>
        <dbReference type="ChEBI" id="CHEBI:29034"/>
        <dbReference type="EC" id="7.1.1.9"/>
    </reaction>
    <physiologicalReaction direction="left-to-right" evidence="1">
        <dbReference type="Rhea" id="RHEA:11437"/>
    </physiologicalReaction>
</comment>
<comment type="subunit">
    <text evidence="1">Component of the cytochrome c oxidase (complex IV, CIV), a multisubunit enzyme composed of a catalytic core of 3 subunits and several supernumerary subunits. The complex exists as a monomer or a dimer and forms supercomplexes (SCs) in the inner mitochondrial membrane with ubiquinol-cytochrome c oxidoreductase (cytochrome b-c1 complex, complex III, CIII).</text>
</comment>
<comment type="subcellular location">
    <subcellularLocation>
        <location evidence="1">Mitochondrion inner membrane</location>
        <topology evidence="1">Multi-pass membrane protein</topology>
    </subcellularLocation>
</comment>
<comment type="similarity">
    <text evidence="3">Belongs to the cytochrome c oxidase subunit 3 family.</text>
</comment>
<reference key="1">
    <citation type="submission" date="2005-08" db="EMBL/GenBank/DDBJ databases">
        <title>Annotation of mitochondrial genome of Ustilago maydis and comparative analysis of basidiomycete mtDNAs.</title>
        <authorList>
            <person name="Kennell J.C."/>
            <person name="Boehmer C."/>
        </authorList>
    </citation>
    <scope>NUCLEOTIDE SEQUENCE [LARGE SCALE GENOMIC DNA]</scope>
    <source>
        <strain>DSM 14603 / FGSC 9021 / UM521</strain>
    </source>
</reference>
<reference key="2">
    <citation type="journal article" date="2006" name="Nature">
        <title>Insights from the genome of the biotrophic fungal plant pathogen Ustilago maydis.</title>
        <authorList>
            <person name="Kaemper J."/>
            <person name="Kahmann R."/>
            <person name="Boelker M."/>
            <person name="Ma L.-J."/>
            <person name="Brefort T."/>
            <person name="Saville B.J."/>
            <person name="Banuett F."/>
            <person name="Kronstad J.W."/>
            <person name="Gold S.E."/>
            <person name="Mueller O."/>
            <person name="Perlin M.H."/>
            <person name="Woesten H.A.B."/>
            <person name="de Vries R."/>
            <person name="Ruiz-Herrera J."/>
            <person name="Reynaga-Pena C.G."/>
            <person name="Snetselaar K."/>
            <person name="McCann M."/>
            <person name="Perez-Martin J."/>
            <person name="Feldbruegge M."/>
            <person name="Basse C.W."/>
            <person name="Steinberg G."/>
            <person name="Ibeas J.I."/>
            <person name="Holloman W."/>
            <person name="Guzman P."/>
            <person name="Farman M.L."/>
            <person name="Stajich J.E."/>
            <person name="Sentandreu R."/>
            <person name="Gonzalez-Prieto J.M."/>
            <person name="Kennell J.C."/>
            <person name="Molina L."/>
            <person name="Schirawski J."/>
            <person name="Mendoza-Mendoza A."/>
            <person name="Greilinger D."/>
            <person name="Muench K."/>
            <person name="Roessel N."/>
            <person name="Scherer M."/>
            <person name="Vranes M."/>
            <person name="Ladendorf O."/>
            <person name="Vincon V."/>
            <person name="Fuchs U."/>
            <person name="Sandrock B."/>
            <person name="Meng S."/>
            <person name="Ho E.C.H."/>
            <person name="Cahill M.J."/>
            <person name="Boyce K.J."/>
            <person name="Klose J."/>
            <person name="Klosterman S.J."/>
            <person name="Deelstra H.J."/>
            <person name="Ortiz-Castellanos L."/>
            <person name="Li W."/>
            <person name="Sanchez-Alonso P."/>
            <person name="Schreier P.H."/>
            <person name="Haeuser-Hahn I."/>
            <person name="Vaupel M."/>
            <person name="Koopmann E."/>
            <person name="Friedrich G."/>
            <person name="Voss H."/>
            <person name="Schlueter T."/>
            <person name="Margolis J."/>
            <person name="Platt D."/>
            <person name="Swimmer C."/>
            <person name="Gnirke A."/>
            <person name="Chen F."/>
            <person name="Vysotskaia V."/>
            <person name="Mannhaupt G."/>
            <person name="Gueldener U."/>
            <person name="Muensterkoetter M."/>
            <person name="Haase D."/>
            <person name="Oesterheld M."/>
            <person name="Mewes H.-W."/>
            <person name="Mauceli E.W."/>
            <person name="DeCaprio D."/>
            <person name="Wade C.M."/>
            <person name="Butler J."/>
            <person name="Young S.K."/>
            <person name="Jaffe D.B."/>
            <person name="Calvo S.E."/>
            <person name="Nusbaum C."/>
            <person name="Galagan J.E."/>
            <person name="Birren B.W."/>
        </authorList>
    </citation>
    <scope>NUCLEOTIDE SEQUENCE [LARGE SCALE GENOMIC DNA]</scope>
    <source>
        <strain>DSM 14603 / FGSC 9021 / UM521</strain>
    </source>
</reference>
<sequence>MNTQLSRTQFQFQPFHLVTPSPWPLLTSFALLILTSAAVMYFNGYANPLGGSGALLVGIGLATTVAAMALWFRDVVAEGTFLGDHTILVQKGITMGVALFIISEVFFFISVFWAFFHSSLSPTVELGAQWPPVGIATINPFELPLLNTILLLSSGATVTYAHHSVIEGNRRGAILGTLMTLIFAVLFTICQGIEYLNAGFTIADGVFGSTFFFSTGFHGVHVIIGTLFIAVAFFRMLSYHLTDHHHLGFEASILYWHFVDVVWLFLFISVYWWGS</sequence>
<keyword id="KW-0472">Membrane</keyword>
<keyword id="KW-0496">Mitochondrion</keyword>
<keyword id="KW-0999">Mitochondrion inner membrane</keyword>
<keyword id="KW-1185">Reference proteome</keyword>
<keyword id="KW-1278">Translocase</keyword>
<keyword id="KW-0812">Transmembrane</keyword>
<keyword id="KW-1133">Transmembrane helix</keyword>
<accession>Q0H8X4</accession>
<gene>
    <name type="primary">COX3</name>
</gene>
<protein>
    <recommendedName>
        <fullName>Cytochrome c oxidase subunit 3</fullName>
        <ecNumber>7.1.1.9</ecNumber>
    </recommendedName>
    <alternativeName>
        <fullName>Cytochrome c oxidase polypeptide III</fullName>
    </alternativeName>
</protein>
<geneLocation type="mitochondrion"/>
<proteinExistence type="inferred from homology"/>
<name>COX3_MYCMD</name>
<dbReference type="EC" id="7.1.1.9"/>
<dbReference type="EMBL" id="DQ157700">
    <property type="protein sequence ID" value="AAZ67014.1"/>
    <property type="molecule type" value="Genomic_DNA"/>
</dbReference>
<dbReference type="EMBL" id="AACP01000277">
    <property type="status" value="NOT_ANNOTATED_CDS"/>
    <property type="molecule type" value="Genomic_DNA"/>
</dbReference>
<dbReference type="RefSeq" id="YP_762698.1">
    <property type="nucleotide sequence ID" value="NC_008368.1"/>
</dbReference>
<dbReference type="SMR" id="Q0H8X4"/>
<dbReference type="FunCoup" id="Q0H8X4">
    <property type="interactions" value="162"/>
</dbReference>
<dbReference type="STRING" id="237631.Q0H8X4"/>
<dbReference type="GeneID" id="4308279"/>
<dbReference type="InParanoid" id="Q0H8X4"/>
<dbReference type="Proteomes" id="UP000000561">
    <property type="component" value="Mitochondrion"/>
</dbReference>
<dbReference type="GO" id="GO:0005743">
    <property type="term" value="C:mitochondrial inner membrane"/>
    <property type="evidence" value="ECO:0007669"/>
    <property type="project" value="UniProtKB-SubCell"/>
</dbReference>
<dbReference type="GO" id="GO:0005739">
    <property type="term" value="C:mitochondrion"/>
    <property type="evidence" value="ECO:0000318"/>
    <property type="project" value="GO_Central"/>
</dbReference>
<dbReference type="GO" id="GO:0004129">
    <property type="term" value="F:cytochrome-c oxidase activity"/>
    <property type="evidence" value="ECO:0007669"/>
    <property type="project" value="UniProtKB-EC"/>
</dbReference>
<dbReference type="GO" id="GO:0006123">
    <property type="term" value="P:mitochondrial electron transport, cytochrome c to oxygen"/>
    <property type="evidence" value="ECO:0000318"/>
    <property type="project" value="GO_Central"/>
</dbReference>
<dbReference type="CDD" id="cd01665">
    <property type="entry name" value="Cyt_c_Oxidase_III"/>
    <property type="match status" value="1"/>
</dbReference>
<dbReference type="FunFam" id="1.10.287.70:FF:000082">
    <property type="entry name" value="Cytochrome c oxidase subunit 3"/>
    <property type="match status" value="1"/>
</dbReference>
<dbReference type="FunFam" id="1.20.120.80:FF:000002">
    <property type="entry name" value="Cytochrome c oxidase subunit 3"/>
    <property type="match status" value="1"/>
</dbReference>
<dbReference type="Gene3D" id="1.10.287.70">
    <property type="match status" value="1"/>
</dbReference>
<dbReference type="Gene3D" id="1.20.120.80">
    <property type="entry name" value="Cytochrome c oxidase, subunit III, four-helix bundle"/>
    <property type="match status" value="1"/>
</dbReference>
<dbReference type="InterPro" id="IPR024791">
    <property type="entry name" value="Cyt_c/ubiquinol_Oxase_su3"/>
</dbReference>
<dbReference type="InterPro" id="IPR033945">
    <property type="entry name" value="Cyt_c_oxase_su3_dom"/>
</dbReference>
<dbReference type="InterPro" id="IPR000298">
    <property type="entry name" value="Cyt_c_oxidase-like_su3"/>
</dbReference>
<dbReference type="InterPro" id="IPR035973">
    <property type="entry name" value="Cyt_c_oxidase_su3-like_sf"/>
</dbReference>
<dbReference type="InterPro" id="IPR013833">
    <property type="entry name" value="Cyt_c_oxidase_su3_a-hlx"/>
</dbReference>
<dbReference type="PANTHER" id="PTHR11403:SF7">
    <property type="entry name" value="CYTOCHROME C OXIDASE SUBUNIT 3"/>
    <property type="match status" value="1"/>
</dbReference>
<dbReference type="PANTHER" id="PTHR11403">
    <property type="entry name" value="CYTOCHROME C OXIDASE SUBUNIT III"/>
    <property type="match status" value="1"/>
</dbReference>
<dbReference type="Pfam" id="PF00510">
    <property type="entry name" value="COX3"/>
    <property type="match status" value="1"/>
</dbReference>
<dbReference type="SUPFAM" id="SSF81452">
    <property type="entry name" value="Cytochrome c oxidase subunit III-like"/>
    <property type="match status" value="1"/>
</dbReference>
<dbReference type="PROSITE" id="PS50253">
    <property type="entry name" value="COX3"/>
    <property type="match status" value="1"/>
</dbReference>
<feature type="chain" id="PRO_0000271143" description="Cytochrome c oxidase subunit 3">
    <location>
        <begin position="1"/>
        <end position="275"/>
    </location>
</feature>
<feature type="transmembrane region" description="Helical" evidence="2">
    <location>
        <begin position="22"/>
        <end position="42"/>
    </location>
</feature>
<feature type="transmembrane region" description="Helical" evidence="2">
    <location>
        <begin position="52"/>
        <end position="72"/>
    </location>
</feature>
<feature type="transmembrane region" description="Helical" evidence="2">
    <location>
        <begin position="96"/>
        <end position="116"/>
    </location>
</feature>
<feature type="transmembrane region" description="Helical" evidence="2">
    <location>
        <begin position="132"/>
        <end position="152"/>
    </location>
</feature>
<feature type="transmembrane region" description="Helical" evidence="2">
    <location>
        <begin position="173"/>
        <end position="193"/>
    </location>
</feature>
<feature type="transmembrane region" description="Helical" evidence="2">
    <location>
        <begin position="211"/>
        <end position="231"/>
    </location>
</feature>
<feature type="transmembrane region" description="Helical" evidence="2">
    <location>
        <begin position="253"/>
        <end position="273"/>
    </location>
</feature>
<organism>
    <name type="scientific">Mycosarcoma maydis</name>
    <name type="common">Corn smut fungus</name>
    <name type="synonym">Ustilago maydis</name>
    <dbReference type="NCBI Taxonomy" id="5270"/>
    <lineage>
        <taxon>Eukaryota</taxon>
        <taxon>Fungi</taxon>
        <taxon>Dikarya</taxon>
        <taxon>Basidiomycota</taxon>
        <taxon>Ustilaginomycotina</taxon>
        <taxon>Ustilaginomycetes</taxon>
        <taxon>Ustilaginales</taxon>
        <taxon>Ustilaginaceae</taxon>
        <taxon>Mycosarcoma</taxon>
    </lineage>
</organism>
<evidence type="ECO:0000250" key="1">
    <source>
        <dbReference type="UniProtKB" id="P00420"/>
    </source>
</evidence>
<evidence type="ECO:0000255" key="2"/>
<evidence type="ECO:0000305" key="3"/>